<proteinExistence type="inferred from homology"/>
<feature type="chain" id="PRO_0000252732" description="Phosphoribosylformylglycinamidine synthase subunit PurQ">
    <location>
        <begin position="1"/>
        <end position="223"/>
    </location>
</feature>
<feature type="domain" description="Glutamine amidotransferase type-1" evidence="1">
    <location>
        <begin position="3"/>
        <end position="223"/>
    </location>
</feature>
<feature type="active site" description="Nucleophile" evidence="1">
    <location>
        <position position="85"/>
    </location>
</feature>
<feature type="active site" evidence="1">
    <location>
        <position position="193"/>
    </location>
</feature>
<feature type="active site" evidence="1">
    <location>
        <position position="195"/>
    </location>
</feature>
<organism>
    <name type="scientific">Staphylococcus aureus (strain bovine RF122 / ET3-1)</name>
    <dbReference type="NCBI Taxonomy" id="273036"/>
    <lineage>
        <taxon>Bacteria</taxon>
        <taxon>Bacillati</taxon>
        <taxon>Bacillota</taxon>
        <taxon>Bacilli</taxon>
        <taxon>Bacillales</taxon>
        <taxon>Staphylococcaceae</taxon>
        <taxon>Staphylococcus</taxon>
    </lineage>
</organism>
<reference key="1">
    <citation type="journal article" date="2007" name="PLoS ONE">
        <title>Molecular correlates of host specialization in Staphylococcus aureus.</title>
        <authorList>
            <person name="Herron-Olson L."/>
            <person name="Fitzgerald J.R."/>
            <person name="Musser J.M."/>
            <person name="Kapur V."/>
        </authorList>
    </citation>
    <scope>NUCLEOTIDE SEQUENCE [LARGE SCALE GENOMIC DNA]</scope>
    <source>
        <strain>bovine RF122 / ET3-1</strain>
    </source>
</reference>
<protein>
    <recommendedName>
        <fullName evidence="1">Phosphoribosylformylglycinamidine synthase subunit PurQ</fullName>
        <shortName evidence="1">FGAM synthase</shortName>
        <ecNumber evidence="1">6.3.5.3</ecNumber>
    </recommendedName>
    <alternativeName>
        <fullName evidence="1">Formylglycinamide ribonucleotide amidotransferase subunit I</fullName>
        <shortName evidence="1">FGAR amidotransferase I</shortName>
        <shortName evidence="1">FGAR-AT I</shortName>
    </alternativeName>
    <alternativeName>
        <fullName evidence="1">Glutaminase PurQ</fullName>
        <ecNumber evidence="1">3.5.1.2</ecNumber>
    </alternativeName>
    <alternativeName>
        <fullName evidence="1">Phosphoribosylformylglycinamidine synthase subunit I</fullName>
    </alternativeName>
</protein>
<dbReference type="EC" id="6.3.5.3" evidence="1"/>
<dbReference type="EC" id="3.5.1.2" evidence="1"/>
<dbReference type="EMBL" id="AJ938182">
    <property type="protein sequence ID" value="CAI80623.1"/>
    <property type="molecule type" value="Genomic_DNA"/>
</dbReference>
<dbReference type="RefSeq" id="WP_000666795.1">
    <property type="nucleotide sequence ID" value="NC_007622.1"/>
</dbReference>
<dbReference type="SMR" id="Q2YX55"/>
<dbReference type="KEGG" id="sab:SAB0935"/>
<dbReference type="HOGENOM" id="CLU_001031_3_1_9"/>
<dbReference type="UniPathway" id="UPA00074">
    <property type="reaction ID" value="UER00128"/>
</dbReference>
<dbReference type="GO" id="GO:0005737">
    <property type="term" value="C:cytoplasm"/>
    <property type="evidence" value="ECO:0007669"/>
    <property type="project" value="UniProtKB-SubCell"/>
</dbReference>
<dbReference type="GO" id="GO:0005524">
    <property type="term" value="F:ATP binding"/>
    <property type="evidence" value="ECO:0007669"/>
    <property type="project" value="UniProtKB-KW"/>
</dbReference>
<dbReference type="GO" id="GO:0004359">
    <property type="term" value="F:glutaminase activity"/>
    <property type="evidence" value="ECO:0007669"/>
    <property type="project" value="UniProtKB-EC"/>
</dbReference>
<dbReference type="GO" id="GO:0004642">
    <property type="term" value="F:phosphoribosylformylglycinamidine synthase activity"/>
    <property type="evidence" value="ECO:0007669"/>
    <property type="project" value="UniProtKB-UniRule"/>
</dbReference>
<dbReference type="GO" id="GO:0006189">
    <property type="term" value="P:'de novo' IMP biosynthetic process"/>
    <property type="evidence" value="ECO:0007669"/>
    <property type="project" value="UniProtKB-UniRule"/>
</dbReference>
<dbReference type="CDD" id="cd01740">
    <property type="entry name" value="GATase1_FGAR_AT"/>
    <property type="match status" value="1"/>
</dbReference>
<dbReference type="Gene3D" id="3.40.50.880">
    <property type="match status" value="1"/>
</dbReference>
<dbReference type="HAMAP" id="MF_00421">
    <property type="entry name" value="PurQ"/>
    <property type="match status" value="1"/>
</dbReference>
<dbReference type="InterPro" id="IPR029062">
    <property type="entry name" value="Class_I_gatase-like"/>
</dbReference>
<dbReference type="InterPro" id="IPR010075">
    <property type="entry name" value="PRibForGlyAmidine_synth_PurQ"/>
</dbReference>
<dbReference type="NCBIfam" id="TIGR01737">
    <property type="entry name" value="FGAM_synth_I"/>
    <property type="match status" value="1"/>
</dbReference>
<dbReference type="NCBIfam" id="NF002957">
    <property type="entry name" value="PRK03619.1"/>
    <property type="match status" value="1"/>
</dbReference>
<dbReference type="PANTHER" id="PTHR47552">
    <property type="entry name" value="PHOSPHORIBOSYLFORMYLGLYCINAMIDINE SYNTHASE SUBUNIT PURQ"/>
    <property type="match status" value="1"/>
</dbReference>
<dbReference type="PANTHER" id="PTHR47552:SF1">
    <property type="entry name" value="PHOSPHORIBOSYLFORMYLGLYCINAMIDINE SYNTHASE SUBUNIT PURQ"/>
    <property type="match status" value="1"/>
</dbReference>
<dbReference type="Pfam" id="PF13507">
    <property type="entry name" value="GATase_5"/>
    <property type="match status" value="1"/>
</dbReference>
<dbReference type="PIRSF" id="PIRSF001586">
    <property type="entry name" value="FGAM_synth_I"/>
    <property type="match status" value="1"/>
</dbReference>
<dbReference type="SMART" id="SM01211">
    <property type="entry name" value="GATase_5"/>
    <property type="match status" value="1"/>
</dbReference>
<dbReference type="SUPFAM" id="SSF52317">
    <property type="entry name" value="Class I glutamine amidotransferase-like"/>
    <property type="match status" value="1"/>
</dbReference>
<dbReference type="PROSITE" id="PS51273">
    <property type="entry name" value="GATASE_TYPE_1"/>
    <property type="match status" value="1"/>
</dbReference>
<sequence length="223" mass="24536">MKFAVLVFPGSNCDRDMFNAAIKSGVEAEYVDYRETSLSGFDGVLIPGGFSFGDYLRSGAMASVAPIISEVKRLAAEGKPVLGVCNGFQILTEIGLLPGALLHNDSHLFISRNEELEIVNNHTAFTNLYEQGEKVIYPVAHGEGHYYCTDEIYQQLKANNQIILKYVNNPNGSYDDIAGIVNEKGNVCGMMPHPERALETLLGTDSGVKLFEAMVKSWREQHV</sequence>
<accession>Q2YX55</accession>
<comment type="function">
    <text evidence="1">Part of the phosphoribosylformylglycinamidine synthase complex involved in the purines biosynthetic pathway. Catalyzes the ATP-dependent conversion of formylglycinamide ribonucleotide (FGAR) and glutamine to yield formylglycinamidine ribonucleotide (FGAM) and glutamate. The FGAM synthase complex is composed of three subunits. PurQ produces an ammonia molecule by converting glutamine to glutamate. PurL transfers the ammonia molecule to FGAR to form FGAM in an ATP-dependent manner. PurS interacts with PurQ and PurL and is thought to assist in the transfer of the ammonia molecule from PurQ to PurL.</text>
</comment>
<comment type="catalytic activity">
    <reaction evidence="1">
        <text>N(2)-formyl-N(1)-(5-phospho-beta-D-ribosyl)glycinamide + L-glutamine + ATP + H2O = 2-formamido-N(1)-(5-O-phospho-beta-D-ribosyl)acetamidine + L-glutamate + ADP + phosphate + H(+)</text>
        <dbReference type="Rhea" id="RHEA:17129"/>
        <dbReference type="ChEBI" id="CHEBI:15377"/>
        <dbReference type="ChEBI" id="CHEBI:15378"/>
        <dbReference type="ChEBI" id="CHEBI:29985"/>
        <dbReference type="ChEBI" id="CHEBI:30616"/>
        <dbReference type="ChEBI" id="CHEBI:43474"/>
        <dbReference type="ChEBI" id="CHEBI:58359"/>
        <dbReference type="ChEBI" id="CHEBI:147286"/>
        <dbReference type="ChEBI" id="CHEBI:147287"/>
        <dbReference type="ChEBI" id="CHEBI:456216"/>
        <dbReference type="EC" id="6.3.5.3"/>
    </reaction>
</comment>
<comment type="catalytic activity">
    <reaction evidence="1">
        <text>L-glutamine + H2O = L-glutamate + NH4(+)</text>
        <dbReference type="Rhea" id="RHEA:15889"/>
        <dbReference type="ChEBI" id="CHEBI:15377"/>
        <dbReference type="ChEBI" id="CHEBI:28938"/>
        <dbReference type="ChEBI" id="CHEBI:29985"/>
        <dbReference type="ChEBI" id="CHEBI:58359"/>
        <dbReference type="EC" id="3.5.1.2"/>
    </reaction>
</comment>
<comment type="pathway">
    <text evidence="1">Purine metabolism; IMP biosynthesis via de novo pathway; 5-amino-1-(5-phospho-D-ribosyl)imidazole from N(2)-formyl-N(1)-(5-phospho-D-ribosyl)glycinamide: step 1/2.</text>
</comment>
<comment type="subunit">
    <text evidence="1">Part of the FGAM synthase complex composed of 1 PurL, 1 PurQ and 2 PurS subunits.</text>
</comment>
<comment type="subcellular location">
    <subcellularLocation>
        <location evidence="1">Cytoplasm</location>
    </subcellularLocation>
</comment>
<evidence type="ECO:0000255" key="1">
    <source>
        <dbReference type="HAMAP-Rule" id="MF_00421"/>
    </source>
</evidence>
<gene>
    <name evidence="1" type="primary">purQ</name>
    <name type="ordered locus">SAB0935</name>
</gene>
<name>PURQ_STAAB</name>
<keyword id="KW-0067">ATP-binding</keyword>
<keyword id="KW-0963">Cytoplasm</keyword>
<keyword id="KW-0315">Glutamine amidotransferase</keyword>
<keyword id="KW-0378">Hydrolase</keyword>
<keyword id="KW-0436">Ligase</keyword>
<keyword id="KW-0547">Nucleotide-binding</keyword>
<keyword id="KW-0658">Purine biosynthesis</keyword>